<accession>Q2G2P7</accession>
<sequence length="504" mass="56076">MTLYLDGETLTIEDIKSFLQQQSKIEIIDDALERVKKSRAVVERIIENEETVYGITTGFGLFSDVRIDPTQYNELQVNLIRSHACGLGEPFSKEVALVMMILRLNTLLKGHSGATLELVRQLQFFINERIIPIIPQQGSLGASGDLAPLSHLALALIGEGKVLYRGEEKDSDDVLRELNRQPLNLQAKEGLALINGTQAMTAQGVISYIEAEDLGYQSEWIAALTHQSLNGIIDAYRHDVHAVRNFQEQINVAARMRDWLEGSTLTTRQSEIRVQDAYTLRCIPQIHGASFQVFNYVKQQLEFEMNAANDNPLIFEEANETFVISGGNFHGQPIAFALDHLKLGVSELANVSERRLERLVNPQLNGDLPAFLSPEPGLQSGAMIMQYAAASLVSENKTLAHPASVDSITSSANQEDHVSMGTTAARHGYQIIENARRVLAIECVIALQAAELKGVEGLSPKTRRKYDEFRSIVPSITHDRQFHKDIEAVAQYLKQSIYQTTACH</sequence>
<name>HUTH_STAA8</name>
<feature type="chain" id="PRO_1000021570" description="Histidine ammonia-lyase">
    <location>
        <begin position="1"/>
        <end position="504"/>
    </location>
</feature>
<feature type="modified residue" description="2,3-didehydroalanine (Ser)" evidence="1">
    <location>
        <position position="143"/>
    </location>
</feature>
<feature type="cross-link" description="5-imidazolinone (Ala-Gly)" evidence="1">
    <location>
        <begin position="142"/>
        <end position="144"/>
    </location>
</feature>
<comment type="catalytic activity">
    <reaction evidence="1">
        <text>L-histidine = trans-urocanate + NH4(+)</text>
        <dbReference type="Rhea" id="RHEA:21232"/>
        <dbReference type="ChEBI" id="CHEBI:17771"/>
        <dbReference type="ChEBI" id="CHEBI:28938"/>
        <dbReference type="ChEBI" id="CHEBI:57595"/>
        <dbReference type="EC" id="4.3.1.3"/>
    </reaction>
</comment>
<comment type="pathway">
    <text evidence="1">Amino-acid degradation; L-histidine degradation into L-glutamate; N-formimidoyl-L-glutamate from L-histidine: step 1/3.</text>
</comment>
<comment type="subcellular location">
    <subcellularLocation>
        <location evidence="1">Cytoplasm</location>
    </subcellularLocation>
</comment>
<comment type="PTM">
    <text evidence="1">Contains an active site 4-methylidene-imidazol-5-one (MIO), which is formed autocatalytically by cyclization and dehydration of residues Ala-Ser-Gly.</text>
</comment>
<comment type="similarity">
    <text evidence="1">Belongs to the PAL/histidase family.</text>
</comment>
<organism>
    <name type="scientific">Staphylococcus aureus (strain NCTC 8325 / PS 47)</name>
    <dbReference type="NCBI Taxonomy" id="93061"/>
    <lineage>
        <taxon>Bacteria</taxon>
        <taxon>Bacillati</taxon>
        <taxon>Bacillota</taxon>
        <taxon>Bacilli</taxon>
        <taxon>Bacillales</taxon>
        <taxon>Staphylococcaceae</taxon>
        <taxon>Staphylococcus</taxon>
    </lineage>
</organism>
<evidence type="ECO:0000255" key="1">
    <source>
        <dbReference type="HAMAP-Rule" id="MF_00229"/>
    </source>
</evidence>
<reference key="1">
    <citation type="book" date="2006" name="Gram positive pathogens, 2nd edition">
        <title>The Staphylococcus aureus NCTC 8325 genome.</title>
        <editorList>
            <person name="Fischetti V."/>
            <person name="Novick R."/>
            <person name="Ferretti J."/>
            <person name="Portnoy D."/>
            <person name="Rood J."/>
        </editorList>
        <authorList>
            <person name="Gillaspy A.F."/>
            <person name="Worrell V."/>
            <person name="Orvis J."/>
            <person name="Roe B.A."/>
            <person name="Dyer D.W."/>
            <person name="Iandolo J.J."/>
        </authorList>
    </citation>
    <scope>NUCLEOTIDE SEQUENCE [LARGE SCALE GENOMIC DNA]</scope>
    <source>
        <strain>NCTC 8325 / PS 47</strain>
    </source>
</reference>
<gene>
    <name evidence="1" type="primary">hutH</name>
    <name type="ordered locus">SAOUHSC_00008</name>
</gene>
<protein>
    <recommendedName>
        <fullName evidence="1">Histidine ammonia-lyase</fullName>
        <shortName evidence="1">Histidase</shortName>
        <ecNumber evidence="1">4.3.1.3</ecNumber>
    </recommendedName>
</protein>
<proteinExistence type="inferred from homology"/>
<keyword id="KW-0963">Cytoplasm</keyword>
<keyword id="KW-0369">Histidine metabolism</keyword>
<keyword id="KW-0456">Lyase</keyword>
<keyword id="KW-1185">Reference proteome</keyword>
<dbReference type="EC" id="4.3.1.3" evidence="1"/>
<dbReference type="EMBL" id="CP000253">
    <property type="protein sequence ID" value="ABD29199.1"/>
    <property type="molecule type" value="Genomic_DNA"/>
</dbReference>
<dbReference type="RefSeq" id="WP_000177464.1">
    <property type="nucleotide sequence ID" value="NZ_LS483365.1"/>
</dbReference>
<dbReference type="RefSeq" id="YP_498616.1">
    <property type="nucleotide sequence ID" value="NC_007795.1"/>
</dbReference>
<dbReference type="SMR" id="Q2G2P7"/>
<dbReference type="STRING" id="93061.SAOUHSC_00008"/>
<dbReference type="PaxDb" id="1280-SAXN108_0010"/>
<dbReference type="GeneID" id="3919181"/>
<dbReference type="KEGG" id="sao:SAOUHSC_00008"/>
<dbReference type="PATRIC" id="fig|93061.5.peg.8"/>
<dbReference type="eggNOG" id="COG2986">
    <property type="taxonomic scope" value="Bacteria"/>
</dbReference>
<dbReference type="HOGENOM" id="CLU_014801_4_0_9"/>
<dbReference type="OrthoDB" id="9806955at2"/>
<dbReference type="UniPathway" id="UPA00379">
    <property type="reaction ID" value="UER00549"/>
</dbReference>
<dbReference type="PRO" id="PR:Q2G2P7"/>
<dbReference type="Proteomes" id="UP000008816">
    <property type="component" value="Chromosome"/>
</dbReference>
<dbReference type="GO" id="GO:0005737">
    <property type="term" value="C:cytoplasm"/>
    <property type="evidence" value="ECO:0007669"/>
    <property type="project" value="UniProtKB-SubCell"/>
</dbReference>
<dbReference type="GO" id="GO:0004397">
    <property type="term" value="F:histidine ammonia-lyase activity"/>
    <property type="evidence" value="ECO:0000318"/>
    <property type="project" value="GO_Central"/>
</dbReference>
<dbReference type="GO" id="GO:0006548">
    <property type="term" value="P:L-histidine catabolic process"/>
    <property type="evidence" value="ECO:0000318"/>
    <property type="project" value="GO_Central"/>
</dbReference>
<dbReference type="GO" id="GO:0019556">
    <property type="term" value="P:L-histidine catabolic process to glutamate and formamide"/>
    <property type="evidence" value="ECO:0007669"/>
    <property type="project" value="UniProtKB-UniPathway"/>
</dbReference>
<dbReference type="GO" id="GO:0019557">
    <property type="term" value="P:L-histidine catabolic process to glutamate and formate"/>
    <property type="evidence" value="ECO:0007669"/>
    <property type="project" value="UniProtKB-UniPathway"/>
</dbReference>
<dbReference type="CDD" id="cd00332">
    <property type="entry name" value="PAL-HAL"/>
    <property type="match status" value="1"/>
</dbReference>
<dbReference type="FunFam" id="1.10.275.10:FF:000008">
    <property type="entry name" value="Histidine ammonia-lyase"/>
    <property type="match status" value="1"/>
</dbReference>
<dbReference type="FunFam" id="1.20.200.10:FF:000003">
    <property type="entry name" value="Histidine ammonia-lyase"/>
    <property type="match status" value="1"/>
</dbReference>
<dbReference type="Gene3D" id="1.20.200.10">
    <property type="entry name" value="Fumarase/aspartase (Central domain)"/>
    <property type="match status" value="1"/>
</dbReference>
<dbReference type="Gene3D" id="1.10.275.10">
    <property type="entry name" value="Fumarase/aspartase (N-terminal domain)"/>
    <property type="match status" value="1"/>
</dbReference>
<dbReference type="HAMAP" id="MF_00229">
    <property type="entry name" value="His_ammonia_lyase"/>
    <property type="match status" value="1"/>
</dbReference>
<dbReference type="InterPro" id="IPR001106">
    <property type="entry name" value="Aromatic_Lyase"/>
</dbReference>
<dbReference type="InterPro" id="IPR024083">
    <property type="entry name" value="Fumarase/histidase_N"/>
</dbReference>
<dbReference type="InterPro" id="IPR005921">
    <property type="entry name" value="HutH"/>
</dbReference>
<dbReference type="InterPro" id="IPR008948">
    <property type="entry name" value="L-Aspartase-like"/>
</dbReference>
<dbReference type="InterPro" id="IPR022313">
    <property type="entry name" value="Phe/His_NH3-lyase_AS"/>
</dbReference>
<dbReference type="NCBIfam" id="TIGR01225">
    <property type="entry name" value="hutH"/>
    <property type="match status" value="1"/>
</dbReference>
<dbReference type="NCBIfam" id="NF006871">
    <property type="entry name" value="PRK09367.1"/>
    <property type="match status" value="1"/>
</dbReference>
<dbReference type="PANTHER" id="PTHR10362">
    <property type="entry name" value="HISTIDINE AMMONIA-LYASE"/>
    <property type="match status" value="1"/>
</dbReference>
<dbReference type="Pfam" id="PF00221">
    <property type="entry name" value="Lyase_aromatic"/>
    <property type="match status" value="1"/>
</dbReference>
<dbReference type="SUPFAM" id="SSF48557">
    <property type="entry name" value="L-aspartase-like"/>
    <property type="match status" value="1"/>
</dbReference>
<dbReference type="PROSITE" id="PS00488">
    <property type="entry name" value="PAL_HISTIDASE"/>
    <property type="match status" value="1"/>
</dbReference>